<evidence type="ECO:0000269" key="1">
    <source>
    </source>
</evidence>
<evidence type="ECO:0000305" key="2"/>
<keyword id="KW-1185">Reference proteome</keyword>
<proteinExistence type="evidence at transcript level"/>
<reference key="1">
    <citation type="journal article" date="1997" name="Science">
        <title>The complete genome sequence of Escherichia coli K-12.</title>
        <authorList>
            <person name="Blattner F.R."/>
            <person name="Plunkett G. III"/>
            <person name="Bloch C.A."/>
            <person name="Perna N.T."/>
            <person name="Burland V."/>
            <person name="Riley M."/>
            <person name="Collado-Vides J."/>
            <person name="Glasner J.D."/>
            <person name="Rode C.K."/>
            <person name="Mayhew G.F."/>
            <person name="Gregor J."/>
            <person name="Davis N.W."/>
            <person name="Kirkpatrick H.A."/>
            <person name="Goeden M.A."/>
            <person name="Rose D.J."/>
            <person name="Mau B."/>
            <person name="Shao Y."/>
        </authorList>
    </citation>
    <scope>NUCLEOTIDE SEQUENCE [LARGE SCALE GENOMIC DNA]</scope>
    <source>
        <strain>K12 / MG1655 / ATCC 47076</strain>
    </source>
</reference>
<reference key="2">
    <citation type="journal article" date="2006" name="Mol. Syst. Biol.">
        <title>Highly accurate genome sequences of Escherichia coli K-12 strains MG1655 and W3110.</title>
        <authorList>
            <person name="Hayashi K."/>
            <person name="Morooka N."/>
            <person name="Yamamoto Y."/>
            <person name="Fujita K."/>
            <person name="Isono K."/>
            <person name="Choi S."/>
            <person name="Ohtsubo E."/>
            <person name="Baba T."/>
            <person name="Wanner B.L."/>
            <person name="Mori H."/>
            <person name="Horiuchi T."/>
        </authorList>
    </citation>
    <scope>NUCLEOTIDE SEQUENCE [LARGE SCALE GENOMIC DNA]</scope>
    <source>
        <strain>K12 / W3110 / ATCC 27325 / DSM 5911</strain>
    </source>
</reference>
<reference key="3">
    <citation type="journal article" date="2004" name="Mol. Microbiol.">
        <title>Global impact of mature biofilm lifestyle on Escherichia coli K-12 gene expression.</title>
        <authorList>
            <person name="Beloin C."/>
            <person name="Valle J."/>
            <person name="Latour-Lambert P."/>
            <person name="Faure P."/>
            <person name="Kzreminski M."/>
            <person name="Balestrino D."/>
            <person name="Haagensen J.A."/>
            <person name="Molin S."/>
            <person name="Prensier G."/>
            <person name="Arbeille B."/>
            <person name="Ghigo J.M."/>
        </authorList>
    </citation>
    <scope>INDUCTION</scope>
    <scope>DISRUPTION PHENOTYPE</scope>
    <source>
        <strain>K12 / TG1</strain>
    </source>
</reference>
<organism>
    <name type="scientific">Escherichia coli (strain K12)</name>
    <dbReference type="NCBI Taxonomy" id="83333"/>
    <lineage>
        <taxon>Bacteria</taxon>
        <taxon>Pseudomonadati</taxon>
        <taxon>Pseudomonadota</taxon>
        <taxon>Gammaproteobacteria</taxon>
        <taxon>Enterobacterales</taxon>
        <taxon>Enterobacteriaceae</taxon>
        <taxon>Escherichia</taxon>
    </lineage>
</organism>
<name>YGHO_ECOLI</name>
<accession>Q46840</accession>
<accession>A0A385XJM7</accession>
<accession>Q2M9L4</accession>
<comment type="induction">
    <text evidence="1">During biofilm formation.</text>
</comment>
<comment type="disruption phenotype">
    <text evidence="1">Reduced formation of biofilm.</text>
</comment>
<comment type="miscellaneous">
    <text evidence="2">May be missing up to 10 N-terminal residues compared to orthologs.</text>
</comment>
<feature type="chain" id="PRO_0000169388" description="Protein YghO">
    <location>
        <begin position="1"/>
        <end position="390"/>
    </location>
</feature>
<protein>
    <recommendedName>
        <fullName>Protein YghO</fullName>
    </recommendedName>
</protein>
<dbReference type="EMBL" id="U28377">
    <property type="protein sequence ID" value="AAA69148.1"/>
    <property type="molecule type" value="Genomic_DNA"/>
</dbReference>
<dbReference type="EMBL" id="U00096">
    <property type="protein sequence ID" value="AYC08243.1"/>
    <property type="molecule type" value="Genomic_DNA"/>
</dbReference>
<dbReference type="EMBL" id="AP009048">
    <property type="protein sequence ID" value="BAE77042.1"/>
    <property type="molecule type" value="Genomic_DNA"/>
</dbReference>
<dbReference type="PIR" id="C65084">
    <property type="entry name" value="C65084"/>
</dbReference>
<dbReference type="BioGRID" id="4263151">
    <property type="interactions" value="7"/>
</dbReference>
<dbReference type="DIP" id="DIP-12207N"/>
<dbReference type="FunCoup" id="Q46840">
    <property type="interactions" value="180"/>
</dbReference>
<dbReference type="IntAct" id="Q46840">
    <property type="interactions" value="1"/>
</dbReference>
<dbReference type="jPOST" id="Q46840"/>
<dbReference type="EnsemblBacteria" id="AYC08243">
    <property type="protein sequence ID" value="AYC08243"/>
    <property type="gene ID" value="b2981"/>
</dbReference>
<dbReference type="KEGG" id="ecj:JW5848"/>
<dbReference type="EchoBASE" id="EB2822"/>
<dbReference type="eggNOG" id="COG0456">
    <property type="taxonomic scope" value="Bacteria"/>
</dbReference>
<dbReference type="HOGENOM" id="CLU_053649_0_0_6"/>
<dbReference type="InParanoid" id="Q46840"/>
<dbReference type="PhylomeDB" id="Q46840"/>
<dbReference type="BioCyc" id="EcoCyc:G7547-MONOMER"/>
<dbReference type="PRO" id="PR:Q46840"/>
<dbReference type="Proteomes" id="UP000000625">
    <property type="component" value="Chromosome"/>
</dbReference>
<dbReference type="GO" id="GO:0044010">
    <property type="term" value="P:single-species biofilm formation"/>
    <property type="evidence" value="ECO:0000315"/>
    <property type="project" value="EcoCyc"/>
</dbReference>
<dbReference type="FunFam" id="3.40.630.30:FF:000304">
    <property type="entry name" value="YghO protein"/>
    <property type="match status" value="1"/>
</dbReference>
<dbReference type="Gene3D" id="3.40.630.30">
    <property type="match status" value="1"/>
</dbReference>
<dbReference type="InterPro" id="IPR016181">
    <property type="entry name" value="Acyl_CoA_acyltransferase"/>
</dbReference>
<dbReference type="InterPro" id="IPR039968">
    <property type="entry name" value="BcerS-like"/>
</dbReference>
<dbReference type="PANTHER" id="PTHR41368">
    <property type="entry name" value="PROTEIN YGHO"/>
    <property type="match status" value="1"/>
</dbReference>
<dbReference type="PANTHER" id="PTHR41368:SF1">
    <property type="entry name" value="PROTEIN YGHO"/>
    <property type="match status" value="1"/>
</dbReference>
<dbReference type="SUPFAM" id="SSF55729">
    <property type="entry name" value="Acyl-CoA N-acyltransferases (Nat)"/>
    <property type="match status" value="1"/>
</dbReference>
<sequence length="390" mass="44674">MMNPVLWLQMTNMISYQGLVRTFLNKNDLKAFIAFPSSLYPDDPNWIPPLFIERNEHLSAKNPGTDHIIWQAWVAKKAGQIVGRITAQIDTLHRERYGKDTGHFGMIDAIDDPQVFAALFGAAEAWLKSQGASKISGPFSLNINQESGLLIEGFDTPPCAMMPHGKPWYAAHIEQLGYHKGIDLLAWWMQRTDLTFSPALKKLMDQVRKKVTIRCINRQRFAEEMQILREIFNSGWQHNWGFVPFTEHEFATMGDQLKYLVPDDMIYIAEIDSAPCAFIVGLPNINEAIADLNGSLFPFGWAKLLWRLKVSGVRTARVPLMGVRDEYQFSRIGPVIALLLIEALRDPFARRKIDALEMSWILETNTGMNNMLERIGAEPYKRYRLYEKQI</sequence>
<gene>
    <name type="primary">yghO</name>
    <name type="ordered locus">b2981</name>
    <name type="ordered locus">JW5848</name>
</gene>